<accession>P87139</accession>
<organism>
    <name type="scientific">Schizosaccharomyces pombe (strain 972 / ATCC 24843)</name>
    <name type="common">Fission yeast</name>
    <dbReference type="NCBI Taxonomy" id="284812"/>
    <lineage>
        <taxon>Eukaryota</taxon>
        <taxon>Fungi</taxon>
        <taxon>Dikarya</taxon>
        <taxon>Ascomycota</taxon>
        <taxon>Taphrinomycotina</taxon>
        <taxon>Schizosaccharomycetes</taxon>
        <taxon>Schizosaccharomycetales</taxon>
        <taxon>Schizosaccharomycetaceae</taxon>
        <taxon>Schizosaccharomyces</taxon>
    </lineage>
</organism>
<keyword id="KW-0333">Golgi apparatus</keyword>
<keyword id="KW-0472">Membrane</keyword>
<keyword id="KW-0479">Metal-binding</keyword>
<keyword id="KW-0597">Phosphoprotein</keyword>
<keyword id="KW-1185">Reference proteome</keyword>
<keyword id="KW-0732">Signal</keyword>
<keyword id="KW-0812">Transmembrane</keyword>
<keyword id="KW-1133">Transmembrane helix</keyword>
<keyword id="KW-0926">Vacuole</keyword>
<keyword id="KW-0862">Zinc</keyword>
<keyword id="KW-0863">Zinc-finger</keyword>
<comment type="subcellular location">
    <subcellularLocation>
        <location evidence="3">Golgi apparatus membrane</location>
        <topology evidence="3">Single-pass membrane protein</topology>
    </subcellularLocation>
    <subcellularLocation>
        <location evidence="3">Vacuole membrane</location>
        <topology evidence="3">Single-pass membrane protein</topology>
    </subcellularLocation>
</comment>
<sequence>MSYYQIIVCILASISYIILLEVIALDLGVLDNIFIPKRFAASTDVAIQLPDRNVTLWSRQAVFGKHFTNASATTVINLYLPSNFQEDMSGCPNRNDTDASYFYENDIIDYDIEYIEQKSYSSKPSARVQKDDGGESKDEAILDFLLVQRGKCTYFDKALEAQRLGFKGVIVGDNRSPSSFRLHYMVAPDKVDESKVHIPSLFVSTSSYNLLWSDLLHSYRQPLKLYAKPEELGDMFWPFLLCFSPSIIMLITVQALAIRKFIRTYRTKSKTRRFIEDLPSRTISREGFYSEEEEIENSTQNGELVPLMDESTRRATFGVECVICLESFTKGDKVVALPCKHEFHRPCIAKWIVDYRHACPTCNTEVPPPKPF</sequence>
<feature type="signal peptide" evidence="1">
    <location>
        <begin position="1"/>
        <end position="24"/>
    </location>
</feature>
<feature type="chain" id="PRO_0000310482" description="Uncharacterized RING finger protein C57A7.09">
    <location>
        <begin position="25"/>
        <end position="372"/>
    </location>
</feature>
<feature type="transmembrane region" description="Helical" evidence="1">
    <location>
        <begin position="236"/>
        <end position="256"/>
    </location>
</feature>
<feature type="domain" description="PA">
    <location>
        <begin position="92"/>
        <end position="215"/>
    </location>
</feature>
<feature type="zinc finger region" description="RING-type; atypical" evidence="2">
    <location>
        <begin position="321"/>
        <end position="363"/>
    </location>
</feature>
<feature type="modified residue" description="Phosphoserine" evidence="4">
    <location>
        <position position="280"/>
    </location>
</feature>
<evidence type="ECO:0000255" key="1"/>
<evidence type="ECO:0000255" key="2">
    <source>
        <dbReference type="PROSITE-ProRule" id="PRU00175"/>
    </source>
</evidence>
<evidence type="ECO:0000269" key="3">
    <source>
    </source>
</evidence>
<evidence type="ECO:0000269" key="4">
    <source>
    </source>
</evidence>
<gene>
    <name type="ORF">SPAC57A7.09</name>
</gene>
<proteinExistence type="evidence at protein level"/>
<dbReference type="EMBL" id="CU329670">
    <property type="protein sequence ID" value="CAB08767.1"/>
    <property type="molecule type" value="Genomic_DNA"/>
</dbReference>
<dbReference type="PIR" id="T38945">
    <property type="entry name" value="T38945"/>
</dbReference>
<dbReference type="SMR" id="P87139"/>
<dbReference type="BioGRID" id="278662">
    <property type="interactions" value="6"/>
</dbReference>
<dbReference type="FunCoup" id="P87139">
    <property type="interactions" value="468"/>
</dbReference>
<dbReference type="STRING" id="284812.P87139"/>
<dbReference type="iPTMnet" id="P87139"/>
<dbReference type="PaxDb" id="4896-SPAC57A7.09.1"/>
<dbReference type="EnsemblFungi" id="SPAC57A7.09.1">
    <property type="protein sequence ID" value="SPAC57A7.09.1:pep"/>
    <property type="gene ID" value="SPAC57A7.09"/>
</dbReference>
<dbReference type="KEGG" id="spo:2542187"/>
<dbReference type="PomBase" id="SPAC57A7.09"/>
<dbReference type="VEuPathDB" id="FungiDB:SPAC57A7.09"/>
<dbReference type="eggNOG" id="KOG4628">
    <property type="taxonomic scope" value="Eukaryota"/>
</dbReference>
<dbReference type="HOGENOM" id="CLU_806886_0_0_1"/>
<dbReference type="InParanoid" id="P87139"/>
<dbReference type="OMA" id="SKWVVDY"/>
<dbReference type="PhylomeDB" id="P87139"/>
<dbReference type="PRO" id="PR:P87139"/>
<dbReference type="Proteomes" id="UP000002485">
    <property type="component" value="Chromosome I"/>
</dbReference>
<dbReference type="GO" id="GO:0005737">
    <property type="term" value="C:cytoplasm"/>
    <property type="evidence" value="ECO:0000318"/>
    <property type="project" value="GO_Central"/>
</dbReference>
<dbReference type="GO" id="GO:0000324">
    <property type="term" value="C:fungal-type vacuole"/>
    <property type="evidence" value="ECO:0007005"/>
    <property type="project" value="PomBase"/>
</dbReference>
<dbReference type="GO" id="GO:0005794">
    <property type="term" value="C:Golgi apparatus"/>
    <property type="evidence" value="ECO:0007005"/>
    <property type="project" value="PomBase"/>
</dbReference>
<dbReference type="GO" id="GO:0000139">
    <property type="term" value="C:Golgi membrane"/>
    <property type="evidence" value="ECO:0007669"/>
    <property type="project" value="UniProtKB-SubCell"/>
</dbReference>
<dbReference type="GO" id="GO:0005774">
    <property type="term" value="C:vacuolar membrane"/>
    <property type="evidence" value="ECO:0007669"/>
    <property type="project" value="UniProtKB-SubCell"/>
</dbReference>
<dbReference type="GO" id="GO:0061630">
    <property type="term" value="F:ubiquitin protein ligase activity"/>
    <property type="evidence" value="ECO:0000318"/>
    <property type="project" value="GO_Central"/>
</dbReference>
<dbReference type="GO" id="GO:0008270">
    <property type="term" value="F:zinc ion binding"/>
    <property type="evidence" value="ECO:0000255"/>
    <property type="project" value="PomBase"/>
</dbReference>
<dbReference type="GO" id="GO:0006511">
    <property type="term" value="P:ubiquitin-dependent protein catabolic process"/>
    <property type="evidence" value="ECO:0000318"/>
    <property type="project" value="GO_Central"/>
</dbReference>
<dbReference type="CDD" id="cd16448">
    <property type="entry name" value="RING-H2"/>
    <property type="match status" value="1"/>
</dbReference>
<dbReference type="Gene3D" id="3.50.30.30">
    <property type="match status" value="1"/>
</dbReference>
<dbReference type="Gene3D" id="3.30.40.10">
    <property type="entry name" value="Zinc/RING finger domain, C3HC4 (zinc finger)"/>
    <property type="match status" value="1"/>
</dbReference>
<dbReference type="InterPro" id="IPR046450">
    <property type="entry name" value="PA_dom_sf"/>
</dbReference>
<dbReference type="InterPro" id="IPR003137">
    <property type="entry name" value="PA_domain"/>
</dbReference>
<dbReference type="InterPro" id="IPR051834">
    <property type="entry name" value="RING_finger_E3_ligase"/>
</dbReference>
<dbReference type="InterPro" id="IPR001841">
    <property type="entry name" value="Znf_RING"/>
</dbReference>
<dbReference type="InterPro" id="IPR013083">
    <property type="entry name" value="Znf_RING/FYVE/PHD"/>
</dbReference>
<dbReference type="PANTHER" id="PTHR45931:SF3">
    <property type="entry name" value="RING ZINC FINGER-CONTAINING PROTEIN"/>
    <property type="match status" value="1"/>
</dbReference>
<dbReference type="PANTHER" id="PTHR45931">
    <property type="entry name" value="SI:CH211-59O9.10"/>
    <property type="match status" value="1"/>
</dbReference>
<dbReference type="Pfam" id="PF02225">
    <property type="entry name" value="PA"/>
    <property type="match status" value="1"/>
</dbReference>
<dbReference type="Pfam" id="PF13639">
    <property type="entry name" value="zf-RING_2"/>
    <property type="match status" value="1"/>
</dbReference>
<dbReference type="SMART" id="SM00184">
    <property type="entry name" value="RING"/>
    <property type="match status" value="1"/>
</dbReference>
<dbReference type="SUPFAM" id="SSF52025">
    <property type="entry name" value="PA domain"/>
    <property type="match status" value="1"/>
</dbReference>
<dbReference type="SUPFAM" id="SSF57850">
    <property type="entry name" value="RING/U-box"/>
    <property type="match status" value="1"/>
</dbReference>
<dbReference type="PROSITE" id="PS50089">
    <property type="entry name" value="ZF_RING_2"/>
    <property type="match status" value="1"/>
</dbReference>
<protein>
    <recommendedName>
        <fullName>Uncharacterized RING finger protein C57A7.09</fullName>
    </recommendedName>
</protein>
<name>YDM9_SCHPO</name>
<reference key="1">
    <citation type="journal article" date="2002" name="Nature">
        <title>The genome sequence of Schizosaccharomyces pombe.</title>
        <authorList>
            <person name="Wood V."/>
            <person name="Gwilliam R."/>
            <person name="Rajandream M.A."/>
            <person name="Lyne M.H."/>
            <person name="Lyne R."/>
            <person name="Stewart A."/>
            <person name="Sgouros J.G."/>
            <person name="Peat N."/>
            <person name="Hayles J."/>
            <person name="Baker S.G."/>
            <person name="Basham D."/>
            <person name="Bowman S."/>
            <person name="Brooks K."/>
            <person name="Brown D."/>
            <person name="Brown S."/>
            <person name="Chillingworth T."/>
            <person name="Churcher C.M."/>
            <person name="Collins M."/>
            <person name="Connor R."/>
            <person name="Cronin A."/>
            <person name="Davis P."/>
            <person name="Feltwell T."/>
            <person name="Fraser A."/>
            <person name="Gentles S."/>
            <person name="Goble A."/>
            <person name="Hamlin N."/>
            <person name="Harris D.E."/>
            <person name="Hidalgo J."/>
            <person name="Hodgson G."/>
            <person name="Holroyd S."/>
            <person name="Hornsby T."/>
            <person name="Howarth S."/>
            <person name="Huckle E.J."/>
            <person name="Hunt S."/>
            <person name="Jagels K."/>
            <person name="James K.D."/>
            <person name="Jones L."/>
            <person name="Jones M."/>
            <person name="Leather S."/>
            <person name="McDonald S."/>
            <person name="McLean J."/>
            <person name="Mooney P."/>
            <person name="Moule S."/>
            <person name="Mungall K.L."/>
            <person name="Murphy L.D."/>
            <person name="Niblett D."/>
            <person name="Odell C."/>
            <person name="Oliver K."/>
            <person name="O'Neil S."/>
            <person name="Pearson D."/>
            <person name="Quail M.A."/>
            <person name="Rabbinowitsch E."/>
            <person name="Rutherford K.M."/>
            <person name="Rutter S."/>
            <person name="Saunders D."/>
            <person name="Seeger K."/>
            <person name="Sharp S."/>
            <person name="Skelton J."/>
            <person name="Simmonds M.N."/>
            <person name="Squares R."/>
            <person name="Squares S."/>
            <person name="Stevens K."/>
            <person name="Taylor K."/>
            <person name="Taylor R.G."/>
            <person name="Tivey A."/>
            <person name="Walsh S.V."/>
            <person name="Warren T."/>
            <person name="Whitehead S."/>
            <person name="Woodward J.R."/>
            <person name="Volckaert G."/>
            <person name="Aert R."/>
            <person name="Robben J."/>
            <person name="Grymonprez B."/>
            <person name="Weltjens I."/>
            <person name="Vanstreels E."/>
            <person name="Rieger M."/>
            <person name="Schaefer M."/>
            <person name="Mueller-Auer S."/>
            <person name="Gabel C."/>
            <person name="Fuchs M."/>
            <person name="Duesterhoeft A."/>
            <person name="Fritzc C."/>
            <person name="Holzer E."/>
            <person name="Moestl D."/>
            <person name="Hilbert H."/>
            <person name="Borzym K."/>
            <person name="Langer I."/>
            <person name="Beck A."/>
            <person name="Lehrach H."/>
            <person name="Reinhardt R."/>
            <person name="Pohl T.M."/>
            <person name="Eger P."/>
            <person name="Zimmermann W."/>
            <person name="Wedler H."/>
            <person name="Wambutt R."/>
            <person name="Purnelle B."/>
            <person name="Goffeau A."/>
            <person name="Cadieu E."/>
            <person name="Dreano S."/>
            <person name="Gloux S."/>
            <person name="Lelaure V."/>
            <person name="Mottier S."/>
            <person name="Galibert F."/>
            <person name="Aves S.J."/>
            <person name="Xiang Z."/>
            <person name="Hunt C."/>
            <person name="Moore K."/>
            <person name="Hurst S.M."/>
            <person name="Lucas M."/>
            <person name="Rochet M."/>
            <person name="Gaillardin C."/>
            <person name="Tallada V.A."/>
            <person name="Garzon A."/>
            <person name="Thode G."/>
            <person name="Daga R.R."/>
            <person name="Cruzado L."/>
            <person name="Jimenez J."/>
            <person name="Sanchez M."/>
            <person name="del Rey F."/>
            <person name="Benito J."/>
            <person name="Dominguez A."/>
            <person name="Revuelta J.L."/>
            <person name="Moreno S."/>
            <person name="Armstrong J."/>
            <person name="Forsburg S.L."/>
            <person name="Cerutti L."/>
            <person name="Lowe T."/>
            <person name="McCombie W.R."/>
            <person name="Paulsen I."/>
            <person name="Potashkin J."/>
            <person name="Shpakovski G.V."/>
            <person name="Ussery D."/>
            <person name="Barrell B.G."/>
            <person name="Nurse P."/>
        </authorList>
    </citation>
    <scope>NUCLEOTIDE SEQUENCE [LARGE SCALE GENOMIC DNA]</scope>
    <source>
        <strain>972 / ATCC 24843</strain>
    </source>
</reference>
<reference key="2">
    <citation type="journal article" date="2006" name="Nat. Biotechnol.">
        <title>ORFeome cloning and global analysis of protein localization in the fission yeast Schizosaccharomyces pombe.</title>
        <authorList>
            <person name="Matsuyama A."/>
            <person name="Arai R."/>
            <person name="Yashiroda Y."/>
            <person name="Shirai A."/>
            <person name="Kamata A."/>
            <person name="Sekido S."/>
            <person name="Kobayashi Y."/>
            <person name="Hashimoto A."/>
            <person name="Hamamoto M."/>
            <person name="Hiraoka Y."/>
            <person name="Horinouchi S."/>
            <person name="Yoshida M."/>
        </authorList>
    </citation>
    <scope>SUBCELLULAR LOCATION [LARGE SCALE ANALYSIS]</scope>
</reference>
<reference key="3">
    <citation type="journal article" date="2008" name="J. Proteome Res.">
        <title>Phosphoproteome analysis of fission yeast.</title>
        <authorList>
            <person name="Wilson-Grady J.T."/>
            <person name="Villen J."/>
            <person name="Gygi S.P."/>
        </authorList>
    </citation>
    <scope>PHOSPHORYLATION [LARGE SCALE ANALYSIS] AT SER-280</scope>
    <scope>IDENTIFICATION BY MASS SPECTROMETRY</scope>
</reference>